<feature type="chain" id="PRO_0000298086" description="Cell division topological specificity factor">
    <location>
        <begin position="1"/>
        <end position="84"/>
    </location>
</feature>
<organism>
    <name type="scientific">Burkholderia orbicola (strain AU 1054)</name>
    <dbReference type="NCBI Taxonomy" id="331271"/>
    <lineage>
        <taxon>Bacteria</taxon>
        <taxon>Pseudomonadati</taxon>
        <taxon>Pseudomonadota</taxon>
        <taxon>Betaproteobacteria</taxon>
        <taxon>Burkholderiales</taxon>
        <taxon>Burkholderiaceae</taxon>
        <taxon>Burkholderia</taxon>
        <taxon>Burkholderia cepacia complex</taxon>
        <taxon>Burkholderia orbicola</taxon>
    </lineage>
</organism>
<reference key="1">
    <citation type="submission" date="2006-05" db="EMBL/GenBank/DDBJ databases">
        <title>Complete sequence of chromosome 1 of Burkholderia cenocepacia AU 1054.</title>
        <authorList>
            <consortium name="US DOE Joint Genome Institute"/>
            <person name="Copeland A."/>
            <person name="Lucas S."/>
            <person name="Lapidus A."/>
            <person name="Barry K."/>
            <person name="Detter J.C."/>
            <person name="Glavina del Rio T."/>
            <person name="Hammon N."/>
            <person name="Israni S."/>
            <person name="Dalin E."/>
            <person name="Tice H."/>
            <person name="Pitluck S."/>
            <person name="Chain P."/>
            <person name="Malfatti S."/>
            <person name="Shin M."/>
            <person name="Vergez L."/>
            <person name="Schmutz J."/>
            <person name="Larimer F."/>
            <person name="Land M."/>
            <person name="Hauser L."/>
            <person name="Kyrpides N."/>
            <person name="Lykidis A."/>
            <person name="LiPuma J.J."/>
            <person name="Konstantinidis K."/>
            <person name="Tiedje J.M."/>
            <person name="Richardson P."/>
        </authorList>
    </citation>
    <scope>NUCLEOTIDE SEQUENCE [LARGE SCALE GENOMIC DNA]</scope>
    <source>
        <strain>AU 1054</strain>
    </source>
</reference>
<gene>
    <name evidence="1" type="primary">minE</name>
    <name type="ordered locus">Bcen_0506</name>
</gene>
<sequence>MSILSFLLGEKKKSASVAKERLQLIIAHERVGGRPPADYLPALQKELVAVISKYVHISDDDIRVSLERQDDLEVLEVKIEIPQA</sequence>
<comment type="function">
    <text evidence="1">Prevents the cell division inhibition by proteins MinC and MinD at internal division sites while permitting inhibition at polar sites. This ensures cell division at the proper site by restricting the formation of a division septum at the midpoint of the long axis of the cell.</text>
</comment>
<comment type="similarity">
    <text evidence="1">Belongs to the MinE family.</text>
</comment>
<keyword id="KW-0131">Cell cycle</keyword>
<keyword id="KW-0132">Cell division</keyword>
<name>MINE_BURO1</name>
<dbReference type="EMBL" id="CP000378">
    <property type="protein sequence ID" value="ABF75418.1"/>
    <property type="molecule type" value="Genomic_DNA"/>
</dbReference>
<dbReference type="SMR" id="Q1BY87"/>
<dbReference type="HOGENOM" id="CLU_137929_2_1_4"/>
<dbReference type="GO" id="GO:0051301">
    <property type="term" value="P:cell division"/>
    <property type="evidence" value="ECO:0007669"/>
    <property type="project" value="UniProtKB-KW"/>
</dbReference>
<dbReference type="GO" id="GO:0032955">
    <property type="term" value="P:regulation of division septum assembly"/>
    <property type="evidence" value="ECO:0007669"/>
    <property type="project" value="InterPro"/>
</dbReference>
<dbReference type="FunFam" id="3.30.1070.10:FF:000001">
    <property type="entry name" value="Cell division topological specificity factor"/>
    <property type="match status" value="1"/>
</dbReference>
<dbReference type="Gene3D" id="3.30.1070.10">
    <property type="entry name" value="Cell division topological specificity factor MinE"/>
    <property type="match status" value="1"/>
</dbReference>
<dbReference type="HAMAP" id="MF_00262">
    <property type="entry name" value="MinE"/>
    <property type="match status" value="1"/>
</dbReference>
<dbReference type="InterPro" id="IPR005527">
    <property type="entry name" value="MinE"/>
</dbReference>
<dbReference type="InterPro" id="IPR036707">
    <property type="entry name" value="MinE_sf"/>
</dbReference>
<dbReference type="NCBIfam" id="TIGR01215">
    <property type="entry name" value="minE"/>
    <property type="match status" value="1"/>
</dbReference>
<dbReference type="NCBIfam" id="NF001422">
    <property type="entry name" value="PRK00296.1"/>
    <property type="match status" value="1"/>
</dbReference>
<dbReference type="NCBIfam" id="NF010595">
    <property type="entry name" value="PRK13989.1"/>
    <property type="match status" value="1"/>
</dbReference>
<dbReference type="Pfam" id="PF03776">
    <property type="entry name" value="MinE"/>
    <property type="match status" value="1"/>
</dbReference>
<dbReference type="SUPFAM" id="SSF55229">
    <property type="entry name" value="Cell division protein MinE topological specificity domain"/>
    <property type="match status" value="1"/>
</dbReference>
<proteinExistence type="inferred from homology"/>
<evidence type="ECO:0000255" key="1">
    <source>
        <dbReference type="HAMAP-Rule" id="MF_00262"/>
    </source>
</evidence>
<accession>Q1BY87</accession>
<protein>
    <recommendedName>
        <fullName evidence="1">Cell division topological specificity factor</fullName>
    </recommendedName>
</protein>